<organism>
    <name type="scientific">Arabidopsis thaliana</name>
    <name type="common">Mouse-ear cress</name>
    <dbReference type="NCBI Taxonomy" id="3702"/>
    <lineage>
        <taxon>Eukaryota</taxon>
        <taxon>Viridiplantae</taxon>
        <taxon>Streptophyta</taxon>
        <taxon>Embryophyta</taxon>
        <taxon>Tracheophyta</taxon>
        <taxon>Spermatophyta</taxon>
        <taxon>Magnoliopsida</taxon>
        <taxon>eudicotyledons</taxon>
        <taxon>Gunneridae</taxon>
        <taxon>Pentapetalae</taxon>
        <taxon>rosids</taxon>
        <taxon>malvids</taxon>
        <taxon>Brassicales</taxon>
        <taxon>Brassicaceae</taxon>
        <taxon>Camelineae</taxon>
        <taxon>Arabidopsis</taxon>
    </lineage>
</organism>
<reference key="1">
    <citation type="journal article" date="2002" name="Plant Cell">
        <title>Centromeric localization and adaptive evolution of an Arabidopsis histone H3 variant.</title>
        <authorList>
            <person name="Talbert P.B."/>
            <person name="Masuelli R."/>
            <person name="Tyagi A.P."/>
            <person name="Comai L."/>
            <person name="Henikoff S."/>
        </authorList>
    </citation>
    <scope>NUCLEOTIDE SEQUENCE [MRNA]</scope>
    <scope>VARIANT ALA-21</scope>
    <scope>SUBCELLULAR LOCATION</scope>
    <source>
        <strain>cv. Be-0</strain>
        <strain>cv. Bu-20</strain>
        <strain>cv. Columbia</strain>
        <strain>cv. Fi-0</strain>
        <strain>cv. Kl-0</strain>
        <strain>cv. Landsberg erecta</strain>
        <strain>cv. Nd-1</strain>
        <strain>cv. No-0</strain>
        <strain>cv. Tac-0</strain>
        <tissue>Flower</tissue>
    </source>
</reference>
<reference key="2">
    <citation type="submission" date="2002-03" db="EMBL/GenBank/DDBJ databases">
        <title>Histone H3-like gene of Arabidopsis species.</title>
        <authorList>
            <person name="Kawabe A."/>
            <person name="Nasuda S."/>
        </authorList>
    </citation>
    <scope>NUCLEOTIDE SEQUENCE [MRNA]</scope>
    <source>
        <strain>cv. Columbia</strain>
    </source>
</reference>
<reference key="3">
    <citation type="journal article" date="2000" name="Nature">
        <title>Sequence and analysis of chromosome 1 of the plant Arabidopsis thaliana.</title>
        <authorList>
            <person name="Theologis A."/>
            <person name="Ecker J.R."/>
            <person name="Palm C.J."/>
            <person name="Federspiel N.A."/>
            <person name="Kaul S."/>
            <person name="White O."/>
            <person name="Alonso J."/>
            <person name="Altafi H."/>
            <person name="Araujo R."/>
            <person name="Bowman C.L."/>
            <person name="Brooks S.Y."/>
            <person name="Buehler E."/>
            <person name="Chan A."/>
            <person name="Chao Q."/>
            <person name="Chen H."/>
            <person name="Cheuk R.F."/>
            <person name="Chin C.W."/>
            <person name="Chung M.K."/>
            <person name="Conn L."/>
            <person name="Conway A.B."/>
            <person name="Conway A.R."/>
            <person name="Creasy T.H."/>
            <person name="Dewar K."/>
            <person name="Dunn P."/>
            <person name="Etgu P."/>
            <person name="Feldblyum T.V."/>
            <person name="Feng J.-D."/>
            <person name="Fong B."/>
            <person name="Fujii C.Y."/>
            <person name="Gill J.E."/>
            <person name="Goldsmith A.D."/>
            <person name="Haas B."/>
            <person name="Hansen N.F."/>
            <person name="Hughes B."/>
            <person name="Huizar L."/>
            <person name="Hunter J.L."/>
            <person name="Jenkins J."/>
            <person name="Johnson-Hopson C."/>
            <person name="Khan S."/>
            <person name="Khaykin E."/>
            <person name="Kim C.J."/>
            <person name="Koo H.L."/>
            <person name="Kremenetskaia I."/>
            <person name="Kurtz D.B."/>
            <person name="Kwan A."/>
            <person name="Lam B."/>
            <person name="Langin-Hooper S."/>
            <person name="Lee A."/>
            <person name="Lee J.M."/>
            <person name="Lenz C.A."/>
            <person name="Li J.H."/>
            <person name="Li Y.-P."/>
            <person name="Lin X."/>
            <person name="Liu S.X."/>
            <person name="Liu Z.A."/>
            <person name="Luros J.S."/>
            <person name="Maiti R."/>
            <person name="Marziali A."/>
            <person name="Militscher J."/>
            <person name="Miranda M."/>
            <person name="Nguyen M."/>
            <person name="Nierman W.C."/>
            <person name="Osborne B.I."/>
            <person name="Pai G."/>
            <person name="Peterson J."/>
            <person name="Pham P.K."/>
            <person name="Rizzo M."/>
            <person name="Rooney T."/>
            <person name="Rowley D."/>
            <person name="Sakano H."/>
            <person name="Salzberg S.L."/>
            <person name="Schwartz J.R."/>
            <person name="Shinn P."/>
            <person name="Southwick A.M."/>
            <person name="Sun H."/>
            <person name="Tallon L.J."/>
            <person name="Tambunga G."/>
            <person name="Toriumi M.J."/>
            <person name="Town C.D."/>
            <person name="Utterback T."/>
            <person name="Van Aken S."/>
            <person name="Vaysberg M."/>
            <person name="Vysotskaia V.S."/>
            <person name="Walker M."/>
            <person name="Wu D."/>
            <person name="Yu G."/>
            <person name="Fraser C.M."/>
            <person name="Venter J.C."/>
            <person name="Davis R.W."/>
        </authorList>
    </citation>
    <scope>NUCLEOTIDE SEQUENCE [LARGE SCALE GENOMIC DNA]</scope>
    <source>
        <strain>cv. Columbia</strain>
    </source>
</reference>
<reference key="4">
    <citation type="journal article" date="2017" name="Plant J.">
        <title>Araport11: a complete reannotation of the Arabidopsis thaliana reference genome.</title>
        <authorList>
            <person name="Cheng C.Y."/>
            <person name="Krishnakumar V."/>
            <person name="Chan A.P."/>
            <person name="Thibaud-Nissen F."/>
            <person name="Schobel S."/>
            <person name="Town C.D."/>
        </authorList>
    </citation>
    <scope>GENOME REANNOTATION</scope>
    <source>
        <strain>cv. Columbia</strain>
    </source>
</reference>
<reference key="5">
    <citation type="submission" date="2006-03" db="EMBL/GenBank/DDBJ databases">
        <title>Arabidopsis ORF clones.</title>
        <authorList>
            <person name="Shinn P."/>
            <person name="Chen H."/>
            <person name="Kim C.J."/>
            <person name="Ecker J.R."/>
        </authorList>
    </citation>
    <scope>NUCLEOTIDE SEQUENCE [LARGE SCALE MRNA]</scope>
    <source>
        <strain>cv. Columbia</strain>
    </source>
</reference>
<reference key="6">
    <citation type="submission" date="2004-09" db="EMBL/GenBank/DDBJ databases">
        <title>Large-scale analysis of RIKEN Arabidopsis full-length (RAFL) cDNAs.</title>
        <authorList>
            <person name="Totoki Y."/>
            <person name="Seki M."/>
            <person name="Ishida J."/>
            <person name="Nakajima M."/>
            <person name="Enju A."/>
            <person name="Kamiya A."/>
            <person name="Narusaka M."/>
            <person name="Shin-i T."/>
            <person name="Nakagawa M."/>
            <person name="Sakamoto N."/>
            <person name="Oishi K."/>
            <person name="Kohara Y."/>
            <person name="Kobayashi M."/>
            <person name="Toyoda A."/>
            <person name="Sakaki Y."/>
            <person name="Sakurai T."/>
            <person name="Iida K."/>
            <person name="Akiyama K."/>
            <person name="Satou M."/>
            <person name="Toyoda T."/>
            <person name="Konagaya A."/>
            <person name="Carninci P."/>
            <person name="Kawai J."/>
            <person name="Hayashizaki Y."/>
            <person name="Shinozaki K."/>
        </authorList>
    </citation>
    <scope>NUCLEOTIDE SEQUENCE [LARGE SCALE MRNA]</scope>
    <source>
        <strain>cv. Columbia</strain>
    </source>
</reference>
<reference key="7">
    <citation type="submission" date="2002-03" db="EMBL/GenBank/DDBJ databases">
        <title>Full-length cDNA from Arabidopsis thaliana.</title>
        <authorList>
            <person name="Brover V.V."/>
            <person name="Troukhan M.E."/>
            <person name="Alexandrov N.A."/>
            <person name="Lu Y.-P."/>
            <person name="Flavell R.B."/>
            <person name="Feldmann K.A."/>
        </authorList>
    </citation>
    <scope>NUCLEOTIDE SEQUENCE [LARGE SCALE MRNA]</scope>
</reference>
<reference key="8">
    <citation type="journal article" date="2005" name="Plant J.">
        <title>Analysis of the histone H3 gene family in Arabidopsis and identification of the male-gamete-specific variant AtMGH3.</title>
        <authorList>
            <person name="Okada T."/>
            <person name="Endo M."/>
            <person name="Singh M.B."/>
            <person name="Bhalla P.L."/>
        </authorList>
    </citation>
    <scope>IDENTIFICATION</scope>
    <scope>NOMENCLATURE</scope>
    <scope>TISSUE SPECIFICITY</scope>
</reference>
<reference key="9">
    <citation type="journal article" date="2006" name="Plant Cell">
        <title>Loading of Arabidopsis centromeric histone CENH3 occurs mainly during G2 and requires the presence of the histone fold domain.</title>
        <authorList>
            <person name="Lermontova I."/>
            <person name="Schubert V."/>
            <person name="Fuchs J."/>
            <person name="Klatte S."/>
            <person name="Macas J."/>
            <person name="Schubert I."/>
        </authorList>
    </citation>
    <scope>SUBCELLULAR LOCATION</scope>
    <scope>DEVELOPMENTAL STAGE</scope>
</reference>
<reference key="10">
    <citation type="journal article" date="2007" name="Genes Dev.">
        <title>VIM1, a methylcytosine-binding protein required for centromeric heterochromatinization.</title>
        <authorList>
            <person name="Woo H.R."/>
            <person name="Pontes O."/>
            <person name="Pikaard C.S."/>
            <person name="Richards E.J."/>
        </authorList>
    </citation>
    <scope>INTERACTION WITH ORTH2</scope>
</reference>
<reference key="11">
    <citation type="journal article" date="2011" name="PLoS Genet.">
        <title>Meiosis-specific loading of the centromere-specific histone CENH3 in Arabidopsis thaliana.</title>
        <authorList>
            <person name="Ravi M."/>
            <person name="Shibata F."/>
            <person name="Ramahi J.S."/>
            <person name="Nagaki K."/>
            <person name="Chen C."/>
            <person name="Murata M."/>
            <person name="Chan S.W."/>
        </authorList>
    </citation>
    <scope>SUBCELLULAR LOCATION</scope>
</reference>
<feature type="chain" id="PRO_0000264610" description="Histone H3-like centromeric protein CENH3">
    <location>
        <begin position="1"/>
        <end position="178"/>
    </location>
</feature>
<feature type="region of interest" description="Disordered" evidence="3">
    <location>
        <begin position="1"/>
        <end position="81"/>
    </location>
</feature>
<feature type="compositionally biased region" description="Low complexity" evidence="3">
    <location>
        <begin position="16"/>
        <end position="36"/>
    </location>
</feature>
<feature type="compositionally biased region" description="Polar residues" evidence="3">
    <location>
        <begin position="43"/>
        <end position="56"/>
    </location>
</feature>
<feature type="modified residue" description="N6,N6,N6-trimethyllysine; alternate" evidence="2">
    <location>
        <position position="5"/>
    </location>
</feature>
<feature type="modified residue" description="N6,N6-dimethyllysine; alternate" evidence="2">
    <location>
        <position position="5"/>
    </location>
</feature>
<feature type="modified residue" description="N6-methyllysine; alternate" evidence="2">
    <location>
        <position position="5"/>
    </location>
</feature>
<feature type="modified residue" description="Phosphoserine" evidence="2">
    <location>
        <position position="11"/>
    </location>
</feature>
<feature type="modified residue" description="N6-acetyllysine; alternate" evidence="2">
    <location>
        <position position="63"/>
    </location>
</feature>
<feature type="modified residue" description="N6-methyllysine; alternate" evidence="2">
    <location>
        <position position="63"/>
    </location>
</feature>
<feature type="modified residue" description="N6,N6,N6-trimethyllysine; alternate" evidence="2">
    <location>
        <position position="75"/>
    </location>
</feature>
<feature type="modified residue" description="N6,N6-dimethyllysine; alternate" evidence="2">
    <location>
        <position position="75"/>
    </location>
</feature>
<feature type="modified residue" description="N6-methyllysine; alternate" evidence="2">
    <location>
        <position position="75"/>
    </location>
</feature>
<feature type="sequence variant" description="In strain: cv. Be-0, cv. Kl-0, cv. Tac-0 and cv. Wassilewskija." evidence="4">
    <original>G</original>
    <variation>A</variation>
    <location>
        <position position="21"/>
    </location>
</feature>
<feature type="sequence conflict" description="In Ref. 7; AAM64429." evidence="10" ref="7">
    <original>A</original>
    <variation>S</variation>
    <location>
        <position position="132"/>
    </location>
</feature>
<comment type="function">
    <text evidence="1">Histone H3-like variant which exclusively replaces conventional H3 in the nucleosome core of centromeric chromatin at the inner plate of the kinetochore. Required for recruitment and assembly of kinetochore proteins, mitotic progression and chromosome segregation. May serve as an epigenetic mark that propagates centromere identity through replication and cell division (By similarity).</text>
</comment>
<comment type="subunit">
    <text evidence="1 6">Forms a nucleosome-like histone octamer containing two molecules each of H2A, H2B, CENH3 and H4 assembled in one CENH3-H4 heterotetramer and two H2A-H2B heterodimers (By similarity). Interacts with ORTH2.</text>
</comment>
<comment type="subcellular location">
    <subcellularLocation>
        <location evidence="4 5 7">Chromosome</location>
        <location evidence="4 5 7">Centromere</location>
        <location evidence="4 5 7">Kinetochore</location>
    </subcellularLocation>
    <text evidence="4 5 7">Localizes exclusively in the kinetochore domain of centromeres (PubMed:12034896, PubMed:17028205). Localized at centromeres in both mitotic and meiotic cells (PubMed:21695238).</text>
</comment>
<comment type="developmental stage">
    <text evidence="5">Expressed and/or deposited to centromeres during G2 phase.</text>
</comment>
<comment type="domain">
    <text>The C-terminal histone fold domain is sufficient to direct CENH3 to centromeres.</text>
</comment>
<comment type="similarity">
    <text evidence="10">Belongs to the histone H3 family.</text>
</comment>
<comment type="sequence caution" evidence="10">
    <conflict type="erroneous gene model prediction">
        <sequence resource="EMBL-CDS" id="AAF97340"/>
    </conflict>
</comment>
<name>CENH3_ARATH</name>
<keyword id="KW-0007">Acetylation</keyword>
<keyword id="KW-0137">Centromere</keyword>
<keyword id="KW-0158">Chromosome</keyword>
<keyword id="KW-0238">DNA-binding</keyword>
<keyword id="KW-0995">Kinetochore</keyword>
<keyword id="KW-0488">Methylation</keyword>
<keyword id="KW-0544">Nucleosome core</keyword>
<keyword id="KW-0597">Phosphoprotein</keyword>
<keyword id="KW-1185">Reference proteome</keyword>
<sequence length="178" mass="19709">MARTKHRVTRSQPRNQTDAAGASSSQAAGPTTTPTRRGGEGGDNTQQTNPTTSPATGTRRGAKRSRQAMPRGSQKKSYRYRPGTVALKEIRHFQKQTNLLIPAASFIREVRSITHMLAPPQINRWTAEALVALQEAAEDYLVGLFSDSMLCAIHARRVTLMRKDFELARRLGGKGRPW</sequence>
<accession>Q8RVQ9</accession>
<accession>Q8LCW8</accession>
<accession>Q9LNI6</accession>
<evidence type="ECO:0000250" key="1"/>
<evidence type="ECO:0000250" key="2">
    <source>
        <dbReference type="UniProtKB" id="P59226"/>
    </source>
</evidence>
<evidence type="ECO:0000256" key="3">
    <source>
        <dbReference type="SAM" id="MobiDB-lite"/>
    </source>
</evidence>
<evidence type="ECO:0000269" key="4">
    <source>
    </source>
</evidence>
<evidence type="ECO:0000269" key="5">
    <source>
    </source>
</evidence>
<evidence type="ECO:0000269" key="6">
    <source>
    </source>
</evidence>
<evidence type="ECO:0000269" key="7">
    <source>
    </source>
</evidence>
<evidence type="ECO:0000303" key="8">
    <source>
    </source>
</evidence>
<evidence type="ECO:0000303" key="9">
    <source>
    </source>
</evidence>
<evidence type="ECO:0000305" key="10"/>
<evidence type="ECO:0000312" key="11">
    <source>
        <dbReference type="Araport" id="AT1G01370"/>
    </source>
</evidence>
<evidence type="ECO:0000312" key="12">
    <source>
        <dbReference type="EMBL" id="AAF97340.1"/>
    </source>
</evidence>
<protein>
    <recommendedName>
        <fullName evidence="9">Histone H3-like centromeric protein CENH3</fullName>
    </recommendedName>
    <alternativeName>
        <fullName evidence="9">Centromeric histone CENH3</fullName>
    </alternativeName>
    <alternativeName>
        <fullName evidence="9">Centromeric histone H3</fullName>
    </alternativeName>
    <alternativeName>
        <fullName evidence="8">Histone H3-like centromeric protein HTR12</fullName>
    </alternativeName>
</protein>
<dbReference type="EMBL" id="AF465800">
    <property type="protein sequence ID" value="AAL86775.1"/>
    <property type="molecule type" value="mRNA"/>
</dbReference>
<dbReference type="EMBL" id="AB081500">
    <property type="protein sequence ID" value="BAC79427.1"/>
    <property type="molecule type" value="mRNA"/>
</dbReference>
<dbReference type="EMBL" id="AC023628">
    <property type="protein sequence ID" value="AAF97340.1"/>
    <property type="status" value="ALT_SEQ"/>
    <property type="molecule type" value="Genomic_DNA"/>
</dbReference>
<dbReference type="EMBL" id="CP002684">
    <property type="protein sequence ID" value="AEE27278.1"/>
    <property type="molecule type" value="Genomic_DNA"/>
</dbReference>
<dbReference type="EMBL" id="CP002684">
    <property type="protein sequence ID" value="AEE27279.1"/>
    <property type="molecule type" value="Genomic_DNA"/>
</dbReference>
<dbReference type="EMBL" id="CP002684">
    <property type="protein sequence ID" value="ANM60590.1"/>
    <property type="molecule type" value="Genomic_DNA"/>
</dbReference>
<dbReference type="EMBL" id="CP002684">
    <property type="protein sequence ID" value="ANM60591.1"/>
    <property type="molecule type" value="Genomic_DNA"/>
</dbReference>
<dbReference type="EMBL" id="BT024771">
    <property type="protein sequence ID" value="ABD59109.1"/>
    <property type="molecule type" value="mRNA"/>
</dbReference>
<dbReference type="EMBL" id="AK175840">
    <property type="protein sequence ID" value="BAD43603.1"/>
    <property type="molecule type" value="mRNA"/>
</dbReference>
<dbReference type="EMBL" id="AY086361">
    <property type="protein sequence ID" value="AAM64429.1"/>
    <property type="molecule type" value="mRNA"/>
</dbReference>
<dbReference type="PIR" id="B86144">
    <property type="entry name" value="B86144"/>
</dbReference>
<dbReference type="RefSeq" id="NP_001030927.1">
    <property type="nucleotide sequence ID" value="NM_001035850.3"/>
</dbReference>
<dbReference type="RefSeq" id="NP_001322867.1">
    <property type="nucleotide sequence ID" value="NM_001331269.1"/>
</dbReference>
<dbReference type="RefSeq" id="NP_001322868.1">
    <property type="nucleotide sequence ID" value="NM_001331270.1"/>
</dbReference>
<dbReference type="RefSeq" id="NP_563627.1">
    <property type="nucleotide sequence ID" value="NM_100019.2"/>
</dbReference>
<dbReference type="SMR" id="Q8RVQ9"/>
<dbReference type="BioGRID" id="24341">
    <property type="interactions" value="2"/>
</dbReference>
<dbReference type="FunCoup" id="Q8RVQ9">
    <property type="interactions" value="363"/>
</dbReference>
<dbReference type="STRING" id="3702.Q8RVQ9"/>
<dbReference type="GlyGen" id="Q8RVQ9">
    <property type="glycosylation" value="1 site"/>
</dbReference>
<dbReference type="iPTMnet" id="Q8RVQ9"/>
<dbReference type="PaxDb" id="3702-AT1G01370.1"/>
<dbReference type="ProteomicsDB" id="232176"/>
<dbReference type="EnsemblPlants" id="AT1G01370.1">
    <property type="protein sequence ID" value="AT1G01370.1"/>
    <property type="gene ID" value="AT1G01370"/>
</dbReference>
<dbReference type="EnsemblPlants" id="AT1G01370.2">
    <property type="protein sequence ID" value="AT1G01370.2"/>
    <property type="gene ID" value="AT1G01370"/>
</dbReference>
<dbReference type="EnsemblPlants" id="AT1G01370.3">
    <property type="protein sequence ID" value="AT1G01370.3"/>
    <property type="gene ID" value="AT1G01370"/>
</dbReference>
<dbReference type="EnsemblPlants" id="AT1G01370.4">
    <property type="protein sequence ID" value="AT1G01370.4"/>
    <property type="gene ID" value="AT1G01370"/>
</dbReference>
<dbReference type="GeneID" id="839104"/>
<dbReference type="Gramene" id="AT1G01370.1">
    <property type="protein sequence ID" value="AT1G01370.1"/>
    <property type="gene ID" value="AT1G01370"/>
</dbReference>
<dbReference type="Gramene" id="AT1G01370.2">
    <property type="protein sequence ID" value="AT1G01370.2"/>
    <property type="gene ID" value="AT1G01370"/>
</dbReference>
<dbReference type="Gramene" id="AT1G01370.3">
    <property type="protein sequence ID" value="AT1G01370.3"/>
    <property type="gene ID" value="AT1G01370"/>
</dbReference>
<dbReference type="Gramene" id="AT1G01370.4">
    <property type="protein sequence ID" value="AT1G01370.4"/>
    <property type="gene ID" value="AT1G01370"/>
</dbReference>
<dbReference type="KEGG" id="ath:AT1G01370"/>
<dbReference type="Araport" id="AT1G01370"/>
<dbReference type="TAIR" id="AT1G01370">
    <property type="gene designation" value="HTR12"/>
</dbReference>
<dbReference type="eggNOG" id="KOG1745">
    <property type="taxonomic scope" value="Eukaryota"/>
</dbReference>
<dbReference type="HOGENOM" id="CLU_078295_3_0_1"/>
<dbReference type="InParanoid" id="Q8RVQ9"/>
<dbReference type="OMA" id="FDDSMLC"/>
<dbReference type="PhylomeDB" id="Q8RVQ9"/>
<dbReference type="CD-CODE" id="4299E36E">
    <property type="entry name" value="Nucleolus"/>
</dbReference>
<dbReference type="PRO" id="PR:Q8RVQ9"/>
<dbReference type="Proteomes" id="UP000006548">
    <property type="component" value="Chromosome 1"/>
</dbReference>
<dbReference type="ExpressionAtlas" id="Q8RVQ9">
    <property type="expression patterns" value="baseline and differential"/>
</dbReference>
<dbReference type="GO" id="GO:0000785">
    <property type="term" value="C:chromatin"/>
    <property type="evidence" value="ECO:0000314"/>
    <property type="project" value="TAIR"/>
</dbReference>
<dbReference type="GO" id="GO:0000775">
    <property type="term" value="C:chromosome, centromeric region"/>
    <property type="evidence" value="ECO:0000314"/>
    <property type="project" value="TAIR"/>
</dbReference>
<dbReference type="GO" id="GO:0000776">
    <property type="term" value="C:kinetochore"/>
    <property type="evidence" value="ECO:0007669"/>
    <property type="project" value="UniProtKB-KW"/>
</dbReference>
<dbReference type="GO" id="GO:0000786">
    <property type="term" value="C:nucleosome"/>
    <property type="evidence" value="ECO:0007669"/>
    <property type="project" value="UniProtKB-KW"/>
</dbReference>
<dbReference type="GO" id="GO:0005634">
    <property type="term" value="C:nucleus"/>
    <property type="evidence" value="ECO:0000314"/>
    <property type="project" value="TAIR"/>
</dbReference>
<dbReference type="GO" id="GO:0003677">
    <property type="term" value="F:DNA binding"/>
    <property type="evidence" value="ECO:0007669"/>
    <property type="project" value="UniProtKB-KW"/>
</dbReference>
<dbReference type="GO" id="GO:0046982">
    <property type="term" value="F:protein heterodimerization activity"/>
    <property type="evidence" value="ECO:0007669"/>
    <property type="project" value="InterPro"/>
</dbReference>
<dbReference type="GO" id="GO:0030527">
    <property type="term" value="F:structural constituent of chromatin"/>
    <property type="evidence" value="ECO:0007669"/>
    <property type="project" value="InterPro"/>
</dbReference>
<dbReference type="GO" id="GO:0051301">
    <property type="term" value="P:cell division"/>
    <property type="evidence" value="ECO:0000315"/>
    <property type="project" value="TAIR"/>
</dbReference>
<dbReference type="GO" id="GO:0034508">
    <property type="term" value="P:centromere complex assembly"/>
    <property type="evidence" value="ECO:0000315"/>
    <property type="project" value="TAIR"/>
</dbReference>
<dbReference type="GO" id="GO:0009567">
    <property type="term" value="P:double fertilization forming a zygote and endosperm"/>
    <property type="evidence" value="ECO:0000270"/>
    <property type="project" value="TAIR"/>
</dbReference>
<dbReference type="GO" id="GO:0051321">
    <property type="term" value="P:meiotic cell cycle"/>
    <property type="evidence" value="ECO:0000315"/>
    <property type="project" value="TAIR"/>
</dbReference>
<dbReference type="GO" id="GO:0051307">
    <property type="term" value="P:meiotic chromosome separation"/>
    <property type="evidence" value="ECO:0000315"/>
    <property type="project" value="TAIR"/>
</dbReference>
<dbReference type="CDD" id="cd22911">
    <property type="entry name" value="HFD_H3"/>
    <property type="match status" value="1"/>
</dbReference>
<dbReference type="FunFam" id="1.10.20.10:FF:000106">
    <property type="entry name" value="Centromeric histone 3"/>
    <property type="match status" value="1"/>
</dbReference>
<dbReference type="Gene3D" id="1.10.20.10">
    <property type="entry name" value="Histone, subunit A"/>
    <property type="match status" value="1"/>
</dbReference>
<dbReference type="InterPro" id="IPR009072">
    <property type="entry name" value="Histone-fold"/>
</dbReference>
<dbReference type="InterPro" id="IPR007125">
    <property type="entry name" value="Histone_H2A/H2B/H3"/>
</dbReference>
<dbReference type="InterPro" id="IPR000164">
    <property type="entry name" value="Histone_H3/CENP-A"/>
</dbReference>
<dbReference type="PANTHER" id="PTHR45810:SF1">
    <property type="entry name" value="HISTONE H3-LIKE CENTROMERIC PROTEIN A"/>
    <property type="match status" value="1"/>
</dbReference>
<dbReference type="PANTHER" id="PTHR45810">
    <property type="entry name" value="HISTONE H3.2"/>
    <property type="match status" value="1"/>
</dbReference>
<dbReference type="Pfam" id="PF00125">
    <property type="entry name" value="Histone"/>
    <property type="match status" value="1"/>
</dbReference>
<dbReference type="PRINTS" id="PR00622">
    <property type="entry name" value="HISTONEH3"/>
</dbReference>
<dbReference type="SMART" id="SM00428">
    <property type="entry name" value="H3"/>
    <property type="match status" value="1"/>
</dbReference>
<dbReference type="SUPFAM" id="SSF47113">
    <property type="entry name" value="Histone-fold"/>
    <property type="match status" value="1"/>
</dbReference>
<proteinExistence type="evidence at protein level"/>
<gene>
    <name evidence="9" type="primary">CENH3</name>
    <name evidence="8" type="synonym">HTR12</name>
    <name evidence="11" type="ordered locus">At1g01370</name>
    <name evidence="12" type="ORF">F6F3.17</name>
</gene>